<proteinExistence type="inferred from homology"/>
<organism>
    <name type="scientific">Archaeoglobus fulgidus (strain ATCC 49558 / DSM 4304 / JCM 9628 / NBRC 100126 / VC-16)</name>
    <dbReference type="NCBI Taxonomy" id="224325"/>
    <lineage>
        <taxon>Archaea</taxon>
        <taxon>Methanobacteriati</taxon>
        <taxon>Methanobacteriota</taxon>
        <taxon>Archaeoglobi</taxon>
        <taxon>Archaeoglobales</taxon>
        <taxon>Archaeoglobaceae</taxon>
        <taxon>Archaeoglobus</taxon>
    </lineage>
</organism>
<feature type="chain" id="PRO_0000332943" description="Iron-sulfur flavoprotein AF_1519">
    <location>
        <begin position="1"/>
        <end position="195"/>
    </location>
</feature>
<feature type="binding site" evidence="1">
    <location>
        <position position="45"/>
    </location>
    <ligand>
        <name>[4Fe-4S] cluster</name>
        <dbReference type="ChEBI" id="CHEBI:49883"/>
    </ligand>
</feature>
<feature type="binding site" evidence="1">
    <location>
        <position position="48"/>
    </location>
    <ligand>
        <name>[4Fe-4S] cluster</name>
        <dbReference type="ChEBI" id="CHEBI:49883"/>
    </ligand>
</feature>
<feature type="binding site" evidence="1">
    <location>
        <position position="51"/>
    </location>
    <ligand>
        <name>[4Fe-4S] cluster</name>
        <dbReference type="ChEBI" id="CHEBI:49883"/>
    </ligand>
</feature>
<feature type="binding site" evidence="1">
    <location>
        <position position="57"/>
    </location>
    <ligand>
        <name>[4Fe-4S] cluster</name>
        <dbReference type="ChEBI" id="CHEBI:49883"/>
    </ligand>
</feature>
<dbReference type="EMBL" id="AE000782">
    <property type="protein sequence ID" value="AAB89727.1"/>
    <property type="molecule type" value="Genomic_DNA"/>
</dbReference>
<dbReference type="PIR" id="F69439">
    <property type="entry name" value="F69439"/>
</dbReference>
<dbReference type="RefSeq" id="WP_010879016.1">
    <property type="nucleotide sequence ID" value="NC_000917.1"/>
</dbReference>
<dbReference type="SMR" id="O28753"/>
<dbReference type="STRING" id="224325.AF_1519"/>
<dbReference type="PaxDb" id="224325-AF_1519"/>
<dbReference type="DNASU" id="1484747"/>
<dbReference type="EnsemblBacteria" id="AAB89727">
    <property type="protein sequence ID" value="AAB89727"/>
    <property type="gene ID" value="AF_1519"/>
</dbReference>
<dbReference type="KEGG" id="afu:AF_1519"/>
<dbReference type="eggNOG" id="arCOG02573">
    <property type="taxonomic scope" value="Archaea"/>
</dbReference>
<dbReference type="HOGENOM" id="CLU_050993_3_0_2"/>
<dbReference type="OrthoDB" id="9059at2157"/>
<dbReference type="PhylomeDB" id="O28753"/>
<dbReference type="Proteomes" id="UP000002199">
    <property type="component" value="Chromosome"/>
</dbReference>
<dbReference type="GO" id="GO:0051539">
    <property type="term" value="F:4 iron, 4 sulfur cluster binding"/>
    <property type="evidence" value="ECO:0007669"/>
    <property type="project" value="UniProtKB-KW"/>
</dbReference>
<dbReference type="GO" id="GO:0046872">
    <property type="term" value="F:metal ion binding"/>
    <property type="evidence" value="ECO:0007669"/>
    <property type="project" value="UniProtKB-KW"/>
</dbReference>
<dbReference type="GO" id="GO:0016491">
    <property type="term" value="F:oxidoreductase activity"/>
    <property type="evidence" value="ECO:0007669"/>
    <property type="project" value="InterPro"/>
</dbReference>
<dbReference type="Gene3D" id="3.40.50.360">
    <property type="match status" value="1"/>
</dbReference>
<dbReference type="InterPro" id="IPR029039">
    <property type="entry name" value="Flavoprotein-like_sf"/>
</dbReference>
<dbReference type="InterPro" id="IPR005025">
    <property type="entry name" value="FMN_Rdtase-like_dom"/>
</dbReference>
<dbReference type="InterPro" id="IPR051796">
    <property type="entry name" value="ISF_SsuE-like"/>
</dbReference>
<dbReference type="PANTHER" id="PTHR43278:SF3">
    <property type="entry name" value="IRON-SULFUR FLAVOPROTEIN MJ0731"/>
    <property type="match status" value="1"/>
</dbReference>
<dbReference type="PANTHER" id="PTHR43278">
    <property type="entry name" value="NAD(P)H-DEPENDENT FMN-CONTAINING OXIDOREDUCTASE YWQN-RELATED"/>
    <property type="match status" value="1"/>
</dbReference>
<dbReference type="Pfam" id="PF03358">
    <property type="entry name" value="FMN_red"/>
    <property type="match status" value="1"/>
</dbReference>
<dbReference type="SUPFAM" id="SSF52218">
    <property type="entry name" value="Flavoproteins"/>
    <property type="match status" value="1"/>
</dbReference>
<protein>
    <recommendedName>
        <fullName>Iron-sulfur flavoprotein AF_1519</fullName>
    </recommendedName>
    <alternativeName>
        <fullName>AF-2</fullName>
        <shortName>Af2</shortName>
    </alternativeName>
    <alternativeName>
        <fullName>Isf-2</fullName>
    </alternativeName>
</protein>
<evidence type="ECO:0000250" key="1"/>
<evidence type="ECO:0000305" key="2"/>
<accession>O28753</accession>
<comment type="function">
    <text evidence="1">Redox-active protein probably involved in electron transport.</text>
</comment>
<comment type="cofactor">
    <cofactor evidence="1">
        <name>FMN</name>
        <dbReference type="ChEBI" id="CHEBI:58210"/>
    </cofactor>
    <text evidence="1">Binds 1 FMN per subunit.</text>
</comment>
<comment type="cofactor">
    <cofactor evidence="1">
        <name>[4Fe-4S] cluster</name>
        <dbReference type="ChEBI" id="CHEBI:49883"/>
    </cofactor>
    <text evidence="1">Binds 1 [4Fe-4S] cluster.</text>
</comment>
<comment type="subunit">
    <text evidence="1">Homodimer.</text>
</comment>
<comment type="similarity">
    <text evidence="2">Belongs to the SsuE family. Isf subfamily.</text>
</comment>
<sequence>MIVGISGSPRRKATEFVLGEALKMLEERGFETKFFTVRGKKISPCQHCDYCLKHKECRIKDDMFELYEMLKDAKGIVMATPVYNGGVSAQIKAVMDRCRALVAADYDFFRGKVGMAIAVGGDRIGGQELAIQQILTFYILNGVIPVSGGSFGANIGATFWSRDTLEGVKEDEEGFRSLRKTVKRFAEMLEKMEGV</sequence>
<gene>
    <name type="ordered locus">AF_1519</name>
</gene>
<name>ISF2_ARCFU</name>
<reference key="1">
    <citation type="journal article" date="1997" name="Nature">
        <title>The complete genome sequence of the hyperthermophilic, sulphate-reducing archaeon Archaeoglobus fulgidus.</title>
        <authorList>
            <person name="Klenk H.-P."/>
            <person name="Clayton R.A."/>
            <person name="Tomb J.-F."/>
            <person name="White O."/>
            <person name="Nelson K.E."/>
            <person name="Ketchum K.A."/>
            <person name="Dodson R.J."/>
            <person name="Gwinn M.L."/>
            <person name="Hickey E.K."/>
            <person name="Peterson J.D."/>
            <person name="Richardson D.L."/>
            <person name="Kerlavage A.R."/>
            <person name="Graham D.E."/>
            <person name="Kyrpides N.C."/>
            <person name="Fleischmann R.D."/>
            <person name="Quackenbush J."/>
            <person name="Lee N.H."/>
            <person name="Sutton G.G."/>
            <person name="Gill S.R."/>
            <person name="Kirkness E.F."/>
            <person name="Dougherty B.A."/>
            <person name="McKenney K."/>
            <person name="Adams M.D."/>
            <person name="Loftus B.J."/>
            <person name="Peterson S.N."/>
            <person name="Reich C.I."/>
            <person name="McNeil L.K."/>
            <person name="Badger J.H."/>
            <person name="Glodek A."/>
            <person name="Zhou L."/>
            <person name="Overbeek R."/>
            <person name="Gocayne J.D."/>
            <person name="Weidman J.F."/>
            <person name="McDonald L.A."/>
            <person name="Utterback T.R."/>
            <person name="Cotton M.D."/>
            <person name="Spriggs T."/>
            <person name="Artiach P."/>
            <person name="Kaine B.P."/>
            <person name="Sykes S.M."/>
            <person name="Sadow P.W."/>
            <person name="D'Andrea K.P."/>
            <person name="Bowman C."/>
            <person name="Fujii C."/>
            <person name="Garland S.A."/>
            <person name="Mason T.M."/>
            <person name="Olsen G.J."/>
            <person name="Fraser C.M."/>
            <person name="Smith H.O."/>
            <person name="Woese C.R."/>
            <person name="Venter J.C."/>
        </authorList>
    </citation>
    <scope>NUCLEOTIDE SEQUENCE [LARGE SCALE GENOMIC DNA]</scope>
    <source>
        <strain>ATCC 49558 / DSM 4304 / JCM 9628 / NBRC 100126 / VC-16</strain>
    </source>
</reference>
<reference key="2">
    <citation type="journal article" date="2000" name="J. Bacteriol.">
        <title>Site-specific mutational analysis of a novel cysteine motif proposed to ligate the 4Fe-4S cluster in the iron-sulfur flavoprotein of the thermophilic methanoarchaeon Methanosarcina thermophila.</title>
        <authorList>
            <person name="Leartsakulpanich U."/>
            <person name="Antonkine M.L."/>
            <person name="Ferry J.G."/>
        </authorList>
    </citation>
    <scope>PROTEIN FAMILY</scope>
</reference>
<keyword id="KW-0004">4Fe-4S</keyword>
<keyword id="KW-0285">Flavoprotein</keyword>
<keyword id="KW-0288">FMN</keyword>
<keyword id="KW-0408">Iron</keyword>
<keyword id="KW-0411">Iron-sulfur</keyword>
<keyword id="KW-0479">Metal-binding</keyword>
<keyword id="KW-1185">Reference proteome</keyword>